<sequence>MTPTLKQLFEKHNVKGLSNNSKTIKANDAFFAIKNGNDFIADALEKGAALVITDDKKNTTNKVIFVEDIKETLHEAIELFYPKKPKTMIAVTGTNGKSSVVSYIAQIYSLIGQKAASIGTIGVEVFGIDNFNESIGGLTTTDYLSFRKIAHKLAKNGIDYLAFEASSHGLDQQRLGDLKVNVACFTSFSQDHLDYHHTKENYLLAKLKLFTDHLAKDGIAILNSDIEEIKFIKDYLDKHKIKYLCVGANGNCKITKTNSSLKGQNINFIFDNKNYDFDTPIIGSFQASNLLIAGPSVYYTSFDFSKVINALTKVKAVKGRMERVNRTNIFIDYAHTPDALEKALTELKNIKAKGGKLSIIFGCGGNRDTTKRKLMGKIAASIADNVIVTDDNPRHEDPKAIRQEIISGIVTTNYIEIADRKEAIKYGINNLKKDDILLIAGKGHENYQIIGDEKIRFDDAEVASMSFLATAGIQ</sequence>
<gene>
    <name evidence="1" type="primary">murE</name>
    <name type="ordered locus">RBE_0852</name>
</gene>
<name>MURE_RICBR</name>
<keyword id="KW-0067">ATP-binding</keyword>
<keyword id="KW-0131">Cell cycle</keyword>
<keyword id="KW-0132">Cell division</keyword>
<keyword id="KW-0133">Cell shape</keyword>
<keyword id="KW-0961">Cell wall biogenesis/degradation</keyword>
<keyword id="KW-0963">Cytoplasm</keyword>
<keyword id="KW-0436">Ligase</keyword>
<keyword id="KW-0460">Magnesium</keyword>
<keyword id="KW-0547">Nucleotide-binding</keyword>
<keyword id="KW-0573">Peptidoglycan synthesis</keyword>
<evidence type="ECO:0000255" key="1">
    <source>
        <dbReference type="HAMAP-Rule" id="MF_00208"/>
    </source>
</evidence>
<reference key="1">
    <citation type="journal article" date="2006" name="PLoS Genet.">
        <title>Genome sequence of Rickettsia bellii illuminates the role of amoebae in gene exchanges between intracellular pathogens.</title>
        <authorList>
            <person name="Ogata H."/>
            <person name="La Scola B."/>
            <person name="Audic S."/>
            <person name="Renesto P."/>
            <person name="Blanc G."/>
            <person name="Robert C."/>
            <person name="Fournier P.-E."/>
            <person name="Claverie J.-M."/>
            <person name="Raoult D."/>
        </authorList>
    </citation>
    <scope>NUCLEOTIDE SEQUENCE [LARGE SCALE GENOMIC DNA]</scope>
    <source>
        <strain>RML369-C</strain>
    </source>
</reference>
<comment type="function">
    <text evidence="1">Catalyzes the addition of meso-diaminopimelic acid to the nucleotide precursor UDP-N-acetylmuramoyl-L-alanyl-D-glutamate (UMAG) in the biosynthesis of bacterial cell-wall peptidoglycan.</text>
</comment>
<comment type="catalytic activity">
    <reaction evidence="1">
        <text>UDP-N-acetyl-alpha-D-muramoyl-L-alanyl-D-glutamate + meso-2,6-diaminopimelate + ATP = UDP-N-acetyl-alpha-D-muramoyl-L-alanyl-gamma-D-glutamyl-meso-2,6-diaminopimelate + ADP + phosphate + H(+)</text>
        <dbReference type="Rhea" id="RHEA:23676"/>
        <dbReference type="ChEBI" id="CHEBI:15378"/>
        <dbReference type="ChEBI" id="CHEBI:30616"/>
        <dbReference type="ChEBI" id="CHEBI:43474"/>
        <dbReference type="ChEBI" id="CHEBI:57791"/>
        <dbReference type="ChEBI" id="CHEBI:83900"/>
        <dbReference type="ChEBI" id="CHEBI:83905"/>
        <dbReference type="ChEBI" id="CHEBI:456216"/>
        <dbReference type="EC" id="6.3.2.13"/>
    </reaction>
</comment>
<comment type="cofactor">
    <cofactor evidence="1">
        <name>Mg(2+)</name>
        <dbReference type="ChEBI" id="CHEBI:18420"/>
    </cofactor>
</comment>
<comment type="pathway">
    <text evidence="1">Cell wall biogenesis; peptidoglycan biosynthesis.</text>
</comment>
<comment type="subcellular location">
    <subcellularLocation>
        <location evidence="1">Cytoplasm</location>
    </subcellularLocation>
</comment>
<comment type="PTM">
    <text evidence="1">Carboxylation is probably crucial for Mg(2+) binding and, consequently, for the gamma-phosphate positioning of ATP.</text>
</comment>
<comment type="similarity">
    <text evidence="1">Belongs to the MurCDEF family. MurE subfamily.</text>
</comment>
<protein>
    <recommendedName>
        <fullName evidence="1">UDP-N-acetylmuramoyl-L-alanyl-D-glutamate--2,6-diaminopimelate ligase</fullName>
        <ecNumber evidence="1">6.3.2.13</ecNumber>
    </recommendedName>
    <alternativeName>
        <fullName evidence="1">Meso-A2pm-adding enzyme</fullName>
    </alternativeName>
    <alternativeName>
        <fullName evidence="1">Meso-diaminopimelate-adding enzyme</fullName>
    </alternativeName>
    <alternativeName>
        <fullName evidence="1">UDP-MurNAc-L-Ala-D-Glu:meso-diaminopimelate ligase</fullName>
    </alternativeName>
    <alternativeName>
        <fullName evidence="1">UDP-MurNAc-tripeptide synthetase</fullName>
    </alternativeName>
    <alternativeName>
        <fullName evidence="1">UDP-N-acetylmuramyl-tripeptide synthetase</fullName>
    </alternativeName>
</protein>
<accession>Q1RI81</accession>
<organism>
    <name type="scientific">Rickettsia bellii (strain RML369-C)</name>
    <dbReference type="NCBI Taxonomy" id="336407"/>
    <lineage>
        <taxon>Bacteria</taxon>
        <taxon>Pseudomonadati</taxon>
        <taxon>Pseudomonadota</taxon>
        <taxon>Alphaproteobacteria</taxon>
        <taxon>Rickettsiales</taxon>
        <taxon>Rickettsiaceae</taxon>
        <taxon>Rickettsieae</taxon>
        <taxon>Rickettsia</taxon>
        <taxon>belli group</taxon>
    </lineage>
</organism>
<proteinExistence type="inferred from homology"/>
<feature type="chain" id="PRO_0000278038" description="UDP-N-acetylmuramoyl-L-alanyl-D-glutamate--2,6-diaminopimelate ligase">
    <location>
        <begin position="1"/>
        <end position="474"/>
    </location>
</feature>
<feature type="short sequence motif" description="Meso-diaminopimelate recognition motif">
    <location>
        <begin position="391"/>
        <end position="394"/>
    </location>
</feature>
<feature type="binding site" evidence="1">
    <location>
        <position position="21"/>
    </location>
    <ligand>
        <name>UDP-N-acetyl-alpha-D-muramoyl-L-alanyl-D-glutamate</name>
        <dbReference type="ChEBI" id="CHEBI:83900"/>
    </ligand>
</feature>
<feature type="binding site" evidence="1">
    <location>
        <begin position="93"/>
        <end position="99"/>
    </location>
    <ligand>
        <name>ATP</name>
        <dbReference type="ChEBI" id="CHEBI:30616"/>
    </ligand>
</feature>
<feature type="binding site" evidence="1">
    <location>
        <begin position="139"/>
        <end position="140"/>
    </location>
    <ligand>
        <name>UDP-N-acetyl-alpha-D-muramoyl-L-alanyl-D-glutamate</name>
        <dbReference type="ChEBI" id="CHEBI:83900"/>
    </ligand>
</feature>
<feature type="binding site" evidence="1">
    <location>
        <position position="166"/>
    </location>
    <ligand>
        <name>UDP-N-acetyl-alpha-D-muramoyl-L-alanyl-D-glutamate</name>
        <dbReference type="ChEBI" id="CHEBI:83900"/>
    </ligand>
</feature>
<feature type="binding site" evidence="1">
    <location>
        <position position="172"/>
    </location>
    <ligand>
        <name>UDP-N-acetyl-alpha-D-muramoyl-L-alanyl-D-glutamate</name>
        <dbReference type="ChEBI" id="CHEBI:83900"/>
    </ligand>
</feature>
<feature type="binding site" evidence="1">
    <location>
        <position position="174"/>
    </location>
    <ligand>
        <name>UDP-N-acetyl-alpha-D-muramoyl-L-alanyl-D-glutamate</name>
        <dbReference type="ChEBI" id="CHEBI:83900"/>
    </ligand>
</feature>
<feature type="binding site" evidence="1">
    <location>
        <position position="367"/>
    </location>
    <ligand>
        <name>meso-2,6-diaminopimelate</name>
        <dbReference type="ChEBI" id="CHEBI:57791"/>
    </ligand>
</feature>
<feature type="binding site" evidence="1">
    <location>
        <begin position="391"/>
        <end position="394"/>
    </location>
    <ligand>
        <name>meso-2,6-diaminopimelate</name>
        <dbReference type="ChEBI" id="CHEBI:57791"/>
    </ligand>
</feature>
<feature type="binding site" evidence="1">
    <location>
        <position position="441"/>
    </location>
    <ligand>
        <name>meso-2,6-diaminopimelate</name>
        <dbReference type="ChEBI" id="CHEBI:57791"/>
    </ligand>
</feature>
<feature type="binding site" evidence="1">
    <location>
        <position position="445"/>
    </location>
    <ligand>
        <name>meso-2,6-diaminopimelate</name>
        <dbReference type="ChEBI" id="CHEBI:57791"/>
    </ligand>
</feature>
<feature type="modified residue" description="N6-carboxylysine" evidence="1">
    <location>
        <position position="206"/>
    </location>
</feature>
<dbReference type="EC" id="6.3.2.13" evidence="1"/>
<dbReference type="EMBL" id="CP000087">
    <property type="protein sequence ID" value="ABE04933.1"/>
    <property type="molecule type" value="Genomic_DNA"/>
</dbReference>
<dbReference type="RefSeq" id="WP_011477518.1">
    <property type="nucleotide sequence ID" value="NC_007940.1"/>
</dbReference>
<dbReference type="SMR" id="Q1RI81"/>
<dbReference type="KEGG" id="rbe:RBE_0852"/>
<dbReference type="eggNOG" id="COG0769">
    <property type="taxonomic scope" value="Bacteria"/>
</dbReference>
<dbReference type="HOGENOM" id="CLU_022291_3_1_5"/>
<dbReference type="OrthoDB" id="9800958at2"/>
<dbReference type="UniPathway" id="UPA00219"/>
<dbReference type="Proteomes" id="UP000001951">
    <property type="component" value="Chromosome"/>
</dbReference>
<dbReference type="GO" id="GO:0005737">
    <property type="term" value="C:cytoplasm"/>
    <property type="evidence" value="ECO:0007669"/>
    <property type="project" value="UniProtKB-SubCell"/>
</dbReference>
<dbReference type="GO" id="GO:0005524">
    <property type="term" value="F:ATP binding"/>
    <property type="evidence" value="ECO:0007669"/>
    <property type="project" value="UniProtKB-UniRule"/>
</dbReference>
<dbReference type="GO" id="GO:0000287">
    <property type="term" value="F:magnesium ion binding"/>
    <property type="evidence" value="ECO:0007669"/>
    <property type="project" value="UniProtKB-UniRule"/>
</dbReference>
<dbReference type="GO" id="GO:0008765">
    <property type="term" value="F:UDP-N-acetylmuramoylalanyl-D-glutamate-2,6-diaminopimelate ligase activity"/>
    <property type="evidence" value="ECO:0007669"/>
    <property type="project" value="UniProtKB-UniRule"/>
</dbReference>
<dbReference type="GO" id="GO:0051301">
    <property type="term" value="P:cell division"/>
    <property type="evidence" value="ECO:0007669"/>
    <property type="project" value="UniProtKB-KW"/>
</dbReference>
<dbReference type="GO" id="GO:0071555">
    <property type="term" value="P:cell wall organization"/>
    <property type="evidence" value="ECO:0007669"/>
    <property type="project" value="UniProtKB-KW"/>
</dbReference>
<dbReference type="GO" id="GO:0009252">
    <property type="term" value="P:peptidoglycan biosynthetic process"/>
    <property type="evidence" value="ECO:0007669"/>
    <property type="project" value="UniProtKB-UniRule"/>
</dbReference>
<dbReference type="GO" id="GO:0008360">
    <property type="term" value="P:regulation of cell shape"/>
    <property type="evidence" value="ECO:0007669"/>
    <property type="project" value="UniProtKB-KW"/>
</dbReference>
<dbReference type="Gene3D" id="3.90.190.20">
    <property type="entry name" value="Mur ligase, C-terminal domain"/>
    <property type="match status" value="1"/>
</dbReference>
<dbReference type="Gene3D" id="3.40.1190.10">
    <property type="entry name" value="Mur-like, catalytic domain"/>
    <property type="match status" value="1"/>
</dbReference>
<dbReference type="Gene3D" id="3.40.1390.10">
    <property type="entry name" value="MurE/MurF, N-terminal domain"/>
    <property type="match status" value="1"/>
</dbReference>
<dbReference type="HAMAP" id="MF_00208">
    <property type="entry name" value="MurE"/>
    <property type="match status" value="1"/>
</dbReference>
<dbReference type="InterPro" id="IPR036565">
    <property type="entry name" value="Mur-like_cat_sf"/>
</dbReference>
<dbReference type="InterPro" id="IPR004101">
    <property type="entry name" value="Mur_ligase_C"/>
</dbReference>
<dbReference type="InterPro" id="IPR036615">
    <property type="entry name" value="Mur_ligase_C_dom_sf"/>
</dbReference>
<dbReference type="InterPro" id="IPR013221">
    <property type="entry name" value="Mur_ligase_cen"/>
</dbReference>
<dbReference type="InterPro" id="IPR035911">
    <property type="entry name" value="MurE/MurF_N"/>
</dbReference>
<dbReference type="InterPro" id="IPR005761">
    <property type="entry name" value="UDP-N-AcMur-Glu-dNH2Pim_ligase"/>
</dbReference>
<dbReference type="NCBIfam" id="TIGR01085">
    <property type="entry name" value="murE"/>
    <property type="match status" value="1"/>
</dbReference>
<dbReference type="NCBIfam" id="NF001124">
    <property type="entry name" value="PRK00139.1-2"/>
    <property type="match status" value="1"/>
</dbReference>
<dbReference type="NCBIfam" id="NF001126">
    <property type="entry name" value="PRK00139.1-4"/>
    <property type="match status" value="1"/>
</dbReference>
<dbReference type="PANTHER" id="PTHR23135">
    <property type="entry name" value="MUR LIGASE FAMILY MEMBER"/>
    <property type="match status" value="1"/>
</dbReference>
<dbReference type="PANTHER" id="PTHR23135:SF4">
    <property type="entry name" value="UDP-N-ACETYLMURAMOYL-L-ALANYL-D-GLUTAMATE--2,6-DIAMINOPIMELATE LIGASE MURE HOMOLOG, CHLOROPLASTIC"/>
    <property type="match status" value="1"/>
</dbReference>
<dbReference type="Pfam" id="PF02875">
    <property type="entry name" value="Mur_ligase_C"/>
    <property type="match status" value="1"/>
</dbReference>
<dbReference type="Pfam" id="PF08245">
    <property type="entry name" value="Mur_ligase_M"/>
    <property type="match status" value="1"/>
</dbReference>
<dbReference type="SUPFAM" id="SSF53623">
    <property type="entry name" value="MurD-like peptide ligases, catalytic domain"/>
    <property type="match status" value="1"/>
</dbReference>
<dbReference type="SUPFAM" id="SSF53244">
    <property type="entry name" value="MurD-like peptide ligases, peptide-binding domain"/>
    <property type="match status" value="1"/>
</dbReference>
<dbReference type="SUPFAM" id="SSF63418">
    <property type="entry name" value="MurE/MurF N-terminal domain"/>
    <property type="match status" value="1"/>
</dbReference>